<gene>
    <name evidence="1" type="primary">ARG7</name>
    <name type="synonym">ECM40</name>
    <name type="ordered locus">YMR062C</name>
    <name type="ORF">YM9916.01C</name>
</gene>
<sequence>MRISSTLLQRSKQLIDKYALYVPKTGSFPKGFEVGYTASGVKKNGSLDLGVILNTNKSRPSTAAAVFTTNKFKAAPVLTSKKVLETARGKNINAIVVNSGCANSVTGDLGMKDAQVMIDLVNDKIGQKNSTLVMSTGVIGQRLQMDKISTGINKIFGEEKFGSDFNSWLNVAKSICTTDTFPKLVTSRFKLPSGTEYTLTGMAKGAGMICPNMATLLGFIVTDLPIESKALQKMLTFATTRSFNCISVDGDMSTNDTICMLANGAIDTKEINEDSKDFEQVKLQVTEFAQRLAQLVVRDGEGSTKFVTVNVKNALHFEDAKIIAESISNSMLVKTALYGQDANWGRILCAIGYAKLNDLKSLDVNKINVSFIATDNSEPRELKLVANGVPQLEIDETRASEILALNDLEVSVDLGTGDQAAQFWTCDLSHEYVTINGDYRS</sequence>
<evidence type="ECO:0000255" key="1">
    <source>
        <dbReference type="HAMAP-Rule" id="MF_03124"/>
    </source>
</evidence>
<evidence type="ECO:0000269" key="2">
    <source>
    </source>
</evidence>
<evidence type="ECO:0000269" key="3">
    <source>
    </source>
</evidence>
<evidence type="ECO:0000269" key="4">
    <source>
    </source>
</evidence>
<evidence type="ECO:0000269" key="5">
    <source>
    </source>
</evidence>
<evidence type="ECO:0000269" key="6">
    <source>
    </source>
</evidence>
<reference key="1">
    <citation type="submission" date="1997-02" db="EMBL/GenBank/DDBJ databases">
        <authorList>
            <person name="Li W."/>
            <person name="Fitzgerald M.C."/>
            <person name="Neigeborn L."/>
            <person name="Mitchell A.P."/>
        </authorList>
    </citation>
    <scope>NUCLEOTIDE SEQUENCE [GENOMIC DNA]</scope>
    <source>
        <strain>SK1</strain>
    </source>
</reference>
<reference key="2">
    <citation type="journal article" date="1997" name="Nature">
        <title>The nucleotide sequence of Saccharomyces cerevisiae chromosome XIII.</title>
        <authorList>
            <person name="Bowman S."/>
            <person name="Churcher C.M."/>
            <person name="Badcock K."/>
            <person name="Brown D."/>
            <person name="Chillingworth T."/>
            <person name="Connor R."/>
            <person name="Dedman K."/>
            <person name="Devlin K."/>
            <person name="Gentles S."/>
            <person name="Hamlin N."/>
            <person name="Hunt S."/>
            <person name="Jagels K."/>
            <person name="Lye G."/>
            <person name="Moule S."/>
            <person name="Odell C."/>
            <person name="Pearson D."/>
            <person name="Rajandream M.A."/>
            <person name="Rice P."/>
            <person name="Skelton J."/>
            <person name="Walsh S.V."/>
            <person name="Whitehead S."/>
            <person name="Barrell B.G."/>
        </authorList>
    </citation>
    <scope>NUCLEOTIDE SEQUENCE [LARGE SCALE GENOMIC DNA]</scope>
    <source>
        <strain>ATCC 204508 / S288c</strain>
    </source>
</reference>
<reference key="3">
    <citation type="journal article" date="2014" name="G3 (Bethesda)">
        <title>The reference genome sequence of Saccharomyces cerevisiae: Then and now.</title>
        <authorList>
            <person name="Engel S.R."/>
            <person name="Dietrich F.S."/>
            <person name="Fisk D.G."/>
            <person name="Binkley G."/>
            <person name="Balakrishnan R."/>
            <person name="Costanzo M.C."/>
            <person name="Dwight S.S."/>
            <person name="Hitz B.C."/>
            <person name="Karra K."/>
            <person name="Nash R.S."/>
            <person name="Weng S."/>
            <person name="Wong E.D."/>
            <person name="Lloyd P."/>
            <person name="Skrzypek M.S."/>
            <person name="Miyasato S.R."/>
            <person name="Simison M."/>
            <person name="Cherry J.M."/>
        </authorList>
    </citation>
    <scope>GENOME REANNOTATION</scope>
    <source>
        <strain>ATCC 204508 / S288c</strain>
    </source>
</reference>
<reference key="4">
    <citation type="journal article" date="1995" name="Eur. J. Biochem.">
        <title>Purification and characterization of ornithine acetyltransferase from Saccharomyces cerevisiae.</title>
        <authorList>
            <person name="Liu Y."/>
            <person name="van Heeswijck R."/>
            <person name="Hoej P."/>
            <person name="Hoogenraad N."/>
        </authorList>
    </citation>
    <scope>PROTEIN SEQUENCE OF 9-28 AND 215-234</scope>
    <scope>CHARACTERIZATION</scope>
</reference>
<reference key="5">
    <citation type="journal article" date="1997" name="Eur. J. Biochem.">
        <title>Characterization of the Saccharomyces cerevisiae ARG7 gene encoding ornithine acetyltransferase, an enzyme also endowed with acetylglutamate synthase activity.</title>
        <authorList>
            <person name="Crabeel M."/>
            <person name="Abadjieva A."/>
            <person name="Hilven P."/>
            <person name="Desimpelaere J."/>
            <person name="Soetens O."/>
        </authorList>
    </citation>
    <scope>FUNCTION</scope>
    <scope>ACTIVITY REGULATION</scope>
</reference>
<reference key="6">
    <citation type="journal article" date="2000" name="J. Biol. Chem.">
        <title>The yeast ARG7 gene product is autoproteolyzed to two subunit peptides, yielding active ornithine acetyltransferase.</title>
        <authorList>
            <person name="Abadjieva A."/>
            <person name="Hilven P."/>
            <person name="Pauwels K."/>
            <person name="Crabeel M."/>
        </authorList>
    </citation>
    <scope>PROTEOLYTIC PROCESSING</scope>
    <scope>MUTAGENESIS OF THR-215</scope>
</reference>
<reference key="7">
    <citation type="journal article" date="2003" name="Proc. Natl. Acad. Sci. U.S.A.">
        <title>The proteome of Saccharomyces cerevisiae mitochondria.</title>
        <authorList>
            <person name="Sickmann A."/>
            <person name="Reinders J."/>
            <person name="Wagner Y."/>
            <person name="Joppich C."/>
            <person name="Zahedi R.P."/>
            <person name="Meyer H.E."/>
            <person name="Schoenfisch B."/>
            <person name="Perschil I."/>
            <person name="Chacinska A."/>
            <person name="Guiard B."/>
            <person name="Rehling P."/>
            <person name="Pfanner N."/>
            <person name="Meisinger C."/>
        </authorList>
    </citation>
    <scope>SUBCELLULAR LOCATION [LARGE SCALE ANALYSIS]</scope>
</reference>
<reference key="8">
    <citation type="journal article" date="2007" name="Anal. Biochem.">
        <title>Continuous spectrophotometric assays for three regulatory enzymes of the arginine biosynthetic pathway.</title>
        <authorList>
            <person name="Takahara K."/>
            <person name="Akashi K."/>
            <person name="Yokota A."/>
        </authorList>
    </citation>
    <scope>BIOPHYSICOCHEMICAL PROPERTIES</scope>
</reference>
<keyword id="KW-0012">Acyltransferase</keyword>
<keyword id="KW-0028">Amino-acid biosynthesis</keyword>
<keyword id="KW-0055">Arginine biosynthesis</keyword>
<keyword id="KW-0068">Autocatalytic cleavage</keyword>
<keyword id="KW-0903">Direct protein sequencing</keyword>
<keyword id="KW-0496">Mitochondrion</keyword>
<keyword id="KW-0511">Multifunctional enzyme</keyword>
<keyword id="KW-1185">Reference proteome</keyword>
<keyword id="KW-0808">Transferase</keyword>
<keyword id="KW-0809">Transit peptide</keyword>
<protein>
    <recommendedName>
        <fullName evidence="1">Arginine biosynthesis bifunctional protein ArgJ, mitochondrial</fullName>
    </recommendedName>
    <alternativeName>
        <fullName>Extracellular mutant protein 40</fullName>
    </alternativeName>
    <domain>
        <recommendedName>
            <fullName evidence="1">Glutamate N-acetyltransferase</fullName>
            <shortName evidence="1">GAT</shortName>
            <ecNumber evidence="1">2.3.1.35</ecNumber>
        </recommendedName>
        <alternativeName>
            <fullName evidence="1">Ornithine acetyltransferase</fullName>
            <shortName evidence="1">OATase</shortName>
        </alternativeName>
        <alternativeName>
            <fullName evidence="1">Ornithine transacetylase</fullName>
        </alternativeName>
    </domain>
    <domain>
        <recommendedName>
            <fullName evidence="1">Amino-acid acetyltransferase</fullName>
            <ecNumber evidence="1">2.3.1.1</ecNumber>
        </recommendedName>
        <alternativeName>
            <fullName evidence="1">N-acetylglutamate synthase</fullName>
            <shortName evidence="1">AGS</shortName>
        </alternativeName>
    </domain>
    <component>
        <recommendedName>
            <fullName evidence="1">Arginine biosynthesis bifunctional protein ArgJ alpha chain</fullName>
        </recommendedName>
    </component>
    <component>
        <recommendedName>
            <fullName evidence="1">Arginine biosynthesis bifunctional protein ArgJ beta chain</fullName>
        </recommendedName>
    </component>
</protein>
<organism>
    <name type="scientific">Saccharomyces cerevisiae (strain ATCC 204508 / S288c)</name>
    <name type="common">Baker's yeast</name>
    <dbReference type="NCBI Taxonomy" id="559292"/>
    <lineage>
        <taxon>Eukaryota</taxon>
        <taxon>Fungi</taxon>
        <taxon>Dikarya</taxon>
        <taxon>Ascomycota</taxon>
        <taxon>Saccharomycotina</taxon>
        <taxon>Saccharomycetes</taxon>
        <taxon>Saccharomycetales</taxon>
        <taxon>Saccharomycetaceae</taxon>
        <taxon>Saccharomyces</taxon>
    </lineage>
</organism>
<comment type="function">
    <text evidence="1 6">Catalyzes two activities which are involved in the cyclic version of arginine biosynthesis: the synthesis of acetylglutamate from glutamate and acetyl-CoA, and of ornithine by transacetylation between acetylornithine and glutamate.</text>
</comment>
<comment type="catalytic activity">
    <reaction evidence="1">
        <text>N(2)-acetyl-L-ornithine + L-glutamate = N-acetyl-L-glutamate + L-ornithine</text>
        <dbReference type="Rhea" id="RHEA:15349"/>
        <dbReference type="ChEBI" id="CHEBI:29985"/>
        <dbReference type="ChEBI" id="CHEBI:44337"/>
        <dbReference type="ChEBI" id="CHEBI:46911"/>
        <dbReference type="ChEBI" id="CHEBI:57805"/>
        <dbReference type="EC" id="2.3.1.35"/>
    </reaction>
</comment>
<comment type="catalytic activity">
    <reaction evidence="1">
        <text>L-glutamate + acetyl-CoA = N-acetyl-L-glutamate + CoA + H(+)</text>
        <dbReference type="Rhea" id="RHEA:24292"/>
        <dbReference type="ChEBI" id="CHEBI:15378"/>
        <dbReference type="ChEBI" id="CHEBI:29985"/>
        <dbReference type="ChEBI" id="CHEBI:44337"/>
        <dbReference type="ChEBI" id="CHEBI:57287"/>
        <dbReference type="ChEBI" id="CHEBI:57288"/>
        <dbReference type="EC" id="2.3.1.1"/>
    </reaction>
</comment>
<comment type="activity regulation">
    <text evidence="6">Inhibited by ornithine.</text>
</comment>
<comment type="biophysicochemical properties">
    <kinetics>
        <KM evidence="4">8.4 mM for glutamate</KM>
        <KM evidence="4">2.8 mM for N-acetylornithine</KM>
    </kinetics>
</comment>
<comment type="pathway">
    <text evidence="1">Amino-acid biosynthesis; L-arginine biosynthesis; L-ornithine and N-acetyl-L-glutamate from L-glutamate and N(2)-acetyl-L-ornithine (cyclic): step 1/1.</text>
</comment>
<comment type="pathway">
    <text evidence="1">Amino-acid biosynthesis; L-arginine biosynthesis; N(2)-acetyl-L-ornithine from L-glutamate: step 1/4.</text>
</comment>
<comment type="subunit">
    <text>Heterodimer of an alpha and a beta chain.</text>
</comment>
<comment type="subcellular location">
    <subcellularLocation>
        <location evidence="1 3">Mitochondrion matrix</location>
    </subcellularLocation>
</comment>
<comment type="PTM">
    <text evidence="1 2">The alpha and beta chains are autoproteolytically processed from a single precursor protein within the mitochondrion.</text>
</comment>
<comment type="similarity">
    <text evidence="1">Belongs to the ArgJ family.</text>
</comment>
<name>ARGJ_YEAST</name>
<accession>Q04728</accession>
<accession>D6VZN6</accession>
<accession>Q04682</accession>
<accession>Q09168</accession>
<feature type="transit peptide" description="Mitochondrion" evidence="1 5">
    <location>
        <begin position="1"/>
        <end position="8"/>
    </location>
</feature>
<feature type="chain" id="PRO_0000002283" description="Arginine biosynthesis bifunctional protein ArgJ alpha chain" evidence="1">
    <location>
        <begin position="9"/>
        <end position="214"/>
    </location>
</feature>
<feature type="chain" id="PRO_0000002284" description="Arginine biosynthesis bifunctional protein ArgJ beta chain" evidence="1">
    <location>
        <begin position="215"/>
        <end position="441"/>
    </location>
</feature>
<feature type="active site" description="Nucleophile" evidence="1">
    <location>
        <position position="215"/>
    </location>
</feature>
<feature type="binding site" evidence="1">
    <location>
        <position position="177"/>
    </location>
    <ligand>
        <name>substrate</name>
    </ligand>
</feature>
<feature type="binding site" evidence="1">
    <location>
        <position position="204"/>
    </location>
    <ligand>
        <name>substrate</name>
    </ligand>
</feature>
<feature type="binding site" evidence="1">
    <location>
        <position position="215"/>
    </location>
    <ligand>
        <name>substrate</name>
    </ligand>
</feature>
<feature type="binding site" evidence="1">
    <location>
        <position position="301"/>
    </location>
    <ligand>
        <name>substrate</name>
    </ligand>
</feature>
<feature type="binding site" evidence="1">
    <location>
        <position position="436"/>
    </location>
    <ligand>
        <name>substrate</name>
    </ligand>
</feature>
<feature type="binding site" evidence="1">
    <location>
        <position position="441"/>
    </location>
    <ligand>
        <name>substrate</name>
    </ligand>
</feature>
<feature type="site" description="Involved in the stabilization of negative charge on the oxyanion by the formation of the oxyanion hole" evidence="1">
    <location>
        <position position="136"/>
    </location>
</feature>
<feature type="site" description="Involved in the stabilization of negative charge on the oxyanion by the formation of the oxyanion hole" evidence="1">
    <location>
        <position position="137"/>
    </location>
</feature>
<feature type="site" description="Cleavage; by autolysis">
    <location>
        <begin position="214"/>
        <end position="215"/>
    </location>
</feature>
<feature type="mutagenesis site" description="Blocks autocatalytic processing of the precursor protein." evidence="2">
    <original>T</original>
    <variation>A</variation>
    <location>
        <position position="215"/>
    </location>
</feature>
<proteinExistence type="evidence at protein level"/>
<dbReference type="EC" id="2.3.1.35" evidence="1"/>
<dbReference type="EC" id="2.3.1.1" evidence="1"/>
<dbReference type="EMBL" id="U90438">
    <property type="protein sequence ID" value="AAB49897.1"/>
    <property type="molecule type" value="Genomic_DNA"/>
</dbReference>
<dbReference type="EMBL" id="Z48952">
    <property type="protein sequence ID" value="CAA88787.1"/>
    <property type="molecule type" value="Genomic_DNA"/>
</dbReference>
<dbReference type="EMBL" id="Z49703">
    <property type="protein sequence ID" value="CAA89772.1"/>
    <property type="molecule type" value="Genomic_DNA"/>
</dbReference>
<dbReference type="EMBL" id="BK006946">
    <property type="protein sequence ID" value="DAA09960.1"/>
    <property type="molecule type" value="Genomic_DNA"/>
</dbReference>
<dbReference type="PIR" id="S52822">
    <property type="entry name" value="S52822"/>
</dbReference>
<dbReference type="RefSeq" id="NP_013778.1">
    <property type="nucleotide sequence ID" value="NM_001182560.1"/>
</dbReference>
<dbReference type="SMR" id="Q04728"/>
<dbReference type="BioGRID" id="35237">
    <property type="interactions" value="59"/>
</dbReference>
<dbReference type="FunCoup" id="Q04728">
    <property type="interactions" value="406"/>
</dbReference>
<dbReference type="IntAct" id="Q04728">
    <property type="interactions" value="1"/>
</dbReference>
<dbReference type="STRING" id="4932.YMR062C"/>
<dbReference type="MEROPS" id="T05.001"/>
<dbReference type="iPTMnet" id="Q04728"/>
<dbReference type="PaxDb" id="4932-YMR062C"/>
<dbReference type="PeptideAtlas" id="Q04728"/>
<dbReference type="EnsemblFungi" id="YMR062C_mRNA">
    <property type="protein sequence ID" value="YMR062C"/>
    <property type="gene ID" value="YMR062C"/>
</dbReference>
<dbReference type="GeneID" id="855084"/>
<dbReference type="KEGG" id="sce:YMR062C"/>
<dbReference type="AGR" id="SGD:S000004666"/>
<dbReference type="SGD" id="S000004666">
    <property type="gene designation" value="ARG7"/>
</dbReference>
<dbReference type="VEuPathDB" id="FungiDB:YMR062C"/>
<dbReference type="eggNOG" id="KOG2786">
    <property type="taxonomic scope" value="Eukaryota"/>
</dbReference>
<dbReference type="HOGENOM" id="CLU_027172_1_0_1"/>
<dbReference type="InParanoid" id="Q04728"/>
<dbReference type="OMA" id="WGRIVMA"/>
<dbReference type="OrthoDB" id="2017946at2759"/>
<dbReference type="BioCyc" id="MetaCyc:YMR062C-MONOMER"/>
<dbReference type="BioCyc" id="YEAST:YMR062C-MONOMER"/>
<dbReference type="SABIO-RK" id="Q04728"/>
<dbReference type="UniPathway" id="UPA00068">
    <property type="reaction ID" value="UER00106"/>
</dbReference>
<dbReference type="UniPathway" id="UPA00068">
    <property type="reaction ID" value="UER00111"/>
</dbReference>
<dbReference type="BioGRID-ORCS" id="855084">
    <property type="hits" value="0 hits in 10 CRISPR screens"/>
</dbReference>
<dbReference type="PRO" id="PR:Q04728"/>
<dbReference type="Proteomes" id="UP000002311">
    <property type="component" value="Chromosome XIII"/>
</dbReference>
<dbReference type="RNAct" id="Q04728">
    <property type="molecule type" value="protein"/>
</dbReference>
<dbReference type="GO" id="GO:0005759">
    <property type="term" value="C:mitochondrial matrix"/>
    <property type="evidence" value="ECO:0000314"/>
    <property type="project" value="SGD"/>
</dbReference>
<dbReference type="GO" id="GO:0005739">
    <property type="term" value="C:mitochondrion"/>
    <property type="evidence" value="ECO:0007005"/>
    <property type="project" value="SGD"/>
</dbReference>
<dbReference type="GO" id="GO:0004358">
    <property type="term" value="F:glutamate N-acetyltransferase activity"/>
    <property type="evidence" value="ECO:0007669"/>
    <property type="project" value="UniProtKB-UniRule"/>
</dbReference>
<dbReference type="GO" id="GO:0004042">
    <property type="term" value="F:L-glutamate N-acetyltransferase activity"/>
    <property type="evidence" value="ECO:0000314"/>
    <property type="project" value="SGD"/>
</dbReference>
<dbReference type="GO" id="GO:0006526">
    <property type="term" value="P:L-arginine biosynthetic process"/>
    <property type="evidence" value="ECO:0007669"/>
    <property type="project" value="UniProtKB-UniRule"/>
</dbReference>
<dbReference type="GO" id="GO:0006592">
    <property type="term" value="P:ornithine biosynthetic process"/>
    <property type="evidence" value="ECO:0000314"/>
    <property type="project" value="SGD"/>
</dbReference>
<dbReference type="CDD" id="cd02152">
    <property type="entry name" value="OAT"/>
    <property type="match status" value="1"/>
</dbReference>
<dbReference type="FunFam" id="3.10.20.340:FF:000002">
    <property type="entry name" value="Arginine biosynthesis bifunctional protein ArgJ, mitochondrial"/>
    <property type="match status" value="1"/>
</dbReference>
<dbReference type="FunFam" id="3.30.2330.10:FF:000001">
    <property type="entry name" value="Arginine biosynthesis bifunctional protein ArgJ, mitochondrial"/>
    <property type="match status" value="1"/>
</dbReference>
<dbReference type="FunFam" id="3.60.70.12:FF:000002">
    <property type="entry name" value="Arginine biosynthesis bifunctional protein ArgJ, mitochondrial"/>
    <property type="match status" value="1"/>
</dbReference>
<dbReference type="Gene3D" id="3.30.2330.10">
    <property type="entry name" value="arginine biosynthesis bifunctional protein suprefamily"/>
    <property type="match status" value="1"/>
</dbReference>
<dbReference type="Gene3D" id="3.10.20.340">
    <property type="entry name" value="ArgJ beta chain, C-terminal domain"/>
    <property type="match status" value="1"/>
</dbReference>
<dbReference type="Gene3D" id="3.60.70.12">
    <property type="entry name" value="L-amino peptidase D-ALA esterase/amidase"/>
    <property type="match status" value="1"/>
</dbReference>
<dbReference type="HAMAP" id="MF_01106">
    <property type="entry name" value="ArgJ"/>
    <property type="match status" value="1"/>
</dbReference>
<dbReference type="InterPro" id="IPR002813">
    <property type="entry name" value="Arg_biosynth_ArgJ"/>
</dbReference>
<dbReference type="InterPro" id="IPR016117">
    <property type="entry name" value="ArgJ-like_dom_sf"/>
</dbReference>
<dbReference type="InterPro" id="IPR042195">
    <property type="entry name" value="ArgJ_beta_C"/>
</dbReference>
<dbReference type="NCBIfam" id="TIGR00120">
    <property type="entry name" value="ArgJ"/>
    <property type="match status" value="1"/>
</dbReference>
<dbReference type="NCBIfam" id="NF003802">
    <property type="entry name" value="PRK05388.1"/>
    <property type="match status" value="1"/>
</dbReference>
<dbReference type="PANTHER" id="PTHR23100">
    <property type="entry name" value="ARGININE BIOSYNTHESIS BIFUNCTIONAL PROTEIN ARGJ"/>
    <property type="match status" value="1"/>
</dbReference>
<dbReference type="PANTHER" id="PTHR23100:SF0">
    <property type="entry name" value="ARGININE BIOSYNTHESIS BIFUNCTIONAL PROTEIN ARGJ, MITOCHONDRIAL"/>
    <property type="match status" value="1"/>
</dbReference>
<dbReference type="Pfam" id="PF01960">
    <property type="entry name" value="ArgJ"/>
    <property type="match status" value="1"/>
</dbReference>
<dbReference type="SUPFAM" id="SSF56266">
    <property type="entry name" value="DmpA/ArgJ-like"/>
    <property type="match status" value="1"/>
</dbReference>